<comment type="function">
    <text evidence="2">Inhibits the integrated stress response (ISR) in the infected cell by preventing the sequestration of eIF2B by phosphorylated EIF2S1/eIF-2alpha. Stress granule formation in response to EIF2S1/eIF-2alpha phosphorylation is thus inhibited, which allows protein synthesis and viral replication (PubMed:32690955). Phosphorylates uridine to uridine monophosphate (PubMed:32690955).</text>
</comment>
<comment type="catalytic activity">
    <reaction evidence="2">
        <text>uridine + ATP = UMP + ADP + H(+)</text>
        <dbReference type="Rhea" id="RHEA:16825"/>
        <dbReference type="ChEBI" id="CHEBI:15378"/>
        <dbReference type="ChEBI" id="CHEBI:16704"/>
        <dbReference type="ChEBI" id="CHEBI:30616"/>
        <dbReference type="ChEBI" id="CHEBI:57865"/>
        <dbReference type="ChEBI" id="CHEBI:456216"/>
        <dbReference type="EC" id="2.7.1.48"/>
    </reaction>
    <physiologicalReaction direction="left-to-right" evidence="2">
        <dbReference type="Rhea" id="RHEA:16826"/>
    </physiologicalReaction>
</comment>
<comment type="subunit">
    <text evidence="4">Interacts with host eIF-2B; this interaction disrupts the interaction between eIF2 and eIF-2B, which leads to the inhibition of stress granules formation.</text>
</comment>
<comment type="subcellular location">
    <subcellularLocation>
        <location evidence="2">Host cytoplasm</location>
    </subcellularLocation>
    <subcellularLocation>
        <location evidence="2">Host cytoplasm</location>
        <location evidence="2">Host perinuclear region</location>
    </subcellularLocation>
    <text evidence="2">Accumulates in aggregated form in the host perinuclear region.</text>
</comment>
<comment type="similarity">
    <text evidence="3">Belongs to the uridine kinase family.</text>
</comment>
<feature type="chain" id="PRO_0000458152" description="Uridine kinase P10">
    <location>
        <begin position="1"/>
        <end position="210"/>
    </location>
</feature>
<feature type="active site" evidence="2">
    <location>
        <position position="41"/>
    </location>
</feature>
<feature type="binding site" evidence="1">
    <location>
        <begin position="10"/>
        <end position="18"/>
    </location>
    <ligand>
        <name>ATP</name>
        <dbReference type="ChEBI" id="CHEBI:30616"/>
    </ligand>
</feature>
<feature type="mutagenesis site" description="Complete loss of uridine kinase activity." evidence="2">
    <original>K</original>
    <variation>N</variation>
    <location>
        <position position="16"/>
    </location>
</feature>
<feature type="mutagenesis site" description="Complete loss of uridine kinase activity." evidence="2">
    <original>D</original>
    <variation>A</variation>
    <location>
        <position position="41"/>
    </location>
</feature>
<feature type="mutagenesis site" description="Complete loss of ISR antagonist function, but no effect on uridine kinase activity; when associated with A-200." evidence="2">
    <original>H</original>
    <variation>A</variation>
    <location>
        <position position="193"/>
    </location>
</feature>
<feature type="mutagenesis site" description="Complete loss of ISR antagonist function, but no effect on uridine kinase activity; when associated with A-193." evidence="2">
    <original>H</original>
    <variation>A</variation>
    <location>
        <position position="200"/>
    </location>
</feature>
<accession>B2BW43</accession>
<keyword id="KW-1035">Host cytoplasm</keyword>
<keyword id="KW-1185">Reference proteome</keyword>
<keyword id="KW-0808">Transferase</keyword>
<evidence type="ECO:0000250" key="1">
    <source>
        <dbReference type="UniProtKB" id="Q9HA47"/>
    </source>
</evidence>
<evidence type="ECO:0000269" key="2">
    <source>
    </source>
</evidence>
<evidence type="ECO:0000305" key="3"/>
<evidence type="ECO:0000305" key="4">
    <source>
    </source>
</evidence>
<reference key="1">
    <citation type="journal article" date="2008" name="J. Virol.">
        <title>Identification of a novel coronavirus from a beluga whale by using a panviral microarray.</title>
        <authorList>
            <person name="Mihindukulasuriya K.A."/>
            <person name="Wu G."/>
            <person name="St Leger J."/>
            <person name="Nordhausen R.W."/>
            <person name="Wang D."/>
        </authorList>
    </citation>
    <scope>NUCLEOTIDE SEQUENCE [LARGE SCALE GENOMIC DNA]</scope>
</reference>
<reference key="2">
    <citation type="journal article" date="2020" name="Nat. Microbiol.">
        <title>Inhibition of the integrated stress response by viral proteins that block p-eIF2-eIF2B association.</title>
        <authorList>
            <person name="Rabouw H.H."/>
            <person name="Visser L.J."/>
            <person name="Passchier T.C."/>
            <person name="Langereis M.A."/>
            <person name="Liu F."/>
            <person name="Giansanti P."/>
            <person name="van Vliet A.L.W."/>
            <person name="Dekker J.G."/>
            <person name="van der Grein S.G."/>
            <person name="Saucedo J.G."/>
            <person name="Anand A.A."/>
            <person name="Trellet M.E."/>
            <person name="Bonvin A.M.J.J."/>
            <person name="Walter P."/>
            <person name="Heck A.J.R."/>
            <person name="de Groot R.J."/>
            <person name="van Kuppeveld F.J.M."/>
        </authorList>
    </citation>
    <scope>FUNCTION</scope>
    <scope>INTERACTION WITH HOST EIF-2B</scope>
    <scope>CATALYTIC ACTIVITY</scope>
    <scope>MUTAGENESIS OF LYS-16; ASP-41; HIS-193 AND HIS-200</scope>
    <scope>SUBCELLULAR LOCATION</scope>
    <scope>INTERACTION WITH HUMAN IEF2B</scope>
    <scope>ACTIVE SITE</scope>
</reference>
<reference key="3">
    <citation type="journal article" date="2022" name="Curr. Opin. Immunol.">
        <title>Move and countermove: the integrated stress response in picorna- and coronavirus-infected cells.</title>
        <authorList>
            <person name="Aloise C."/>
            <person name="Schipper J.G."/>
            <person name="de Groot R.J."/>
            <person name="van Kuppeveld F.J."/>
        </authorList>
    </citation>
    <scope>REVIEW</scope>
</reference>
<proteinExistence type="evidence at protein level"/>
<name>UCK10_BWCOV</name>
<sequence>MKPYIIGISGISGSGKSTFAANLKTKCGDFYAGDVVIINLDGFYRSINEDDMCLVKAGEYNFDHPYAIDLDHARRCISAIADGHLVAVPIYDFEKKKCVGHYEVNNPRVVIVEGIHALHPKLFPLYDITAFLEVPMSVALSRRAVRDNKERGRTPEDTAEMFRKFVLPMYKLHVEPNVKKAAILVNGLNTGVHINMLYEHIKPLLIYPRF</sequence>
<dbReference type="EC" id="2.7.1.48" evidence="2"/>
<dbReference type="EMBL" id="EU111742">
    <property type="protein sequence ID" value="ABW87830.1"/>
    <property type="molecule type" value="Genomic_RNA"/>
</dbReference>
<dbReference type="RefSeq" id="YP_001876447.1">
    <property type="nucleotide sequence ID" value="NC_010646.1"/>
</dbReference>
<dbReference type="SMR" id="B2BW43"/>
<dbReference type="KEGG" id="vg:6264435"/>
<dbReference type="Proteomes" id="UP000125413">
    <property type="component" value="Genome"/>
</dbReference>
<dbReference type="GO" id="GO:0044220">
    <property type="term" value="C:host cell perinuclear region of cytoplasm"/>
    <property type="evidence" value="ECO:0007669"/>
    <property type="project" value="UniProtKB-SubCell"/>
</dbReference>
<dbReference type="GO" id="GO:0005524">
    <property type="term" value="F:ATP binding"/>
    <property type="evidence" value="ECO:0007669"/>
    <property type="project" value="InterPro"/>
</dbReference>
<dbReference type="GO" id="GO:0016301">
    <property type="term" value="F:kinase activity"/>
    <property type="evidence" value="ECO:0007669"/>
    <property type="project" value="InterPro"/>
</dbReference>
<dbReference type="Gene3D" id="3.40.50.300">
    <property type="entry name" value="P-loop containing nucleotide triphosphate hydrolases"/>
    <property type="match status" value="1"/>
</dbReference>
<dbReference type="InterPro" id="IPR027417">
    <property type="entry name" value="P-loop_NTPase"/>
</dbReference>
<dbReference type="InterPro" id="IPR006083">
    <property type="entry name" value="PRK/URK"/>
</dbReference>
<dbReference type="PANTHER" id="PTHR10285">
    <property type="entry name" value="URIDINE KINASE"/>
    <property type="match status" value="1"/>
</dbReference>
<dbReference type="Pfam" id="PF00485">
    <property type="entry name" value="PRK"/>
    <property type="match status" value="1"/>
</dbReference>
<dbReference type="PRINTS" id="PR00988">
    <property type="entry name" value="URIDINKINASE"/>
</dbReference>
<dbReference type="SUPFAM" id="SSF52540">
    <property type="entry name" value="P-loop containing nucleoside triphosphate hydrolases"/>
    <property type="match status" value="1"/>
</dbReference>
<protein>
    <recommendedName>
        <fullName evidence="3">Uridine kinase P10</fullName>
        <ecNumber evidence="2">2.7.1.48</ecNumber>
    </recommendedName>
    <alternativeName>
        <fullName>Accessory protein P10</fullName>
        <shortName>AcP10</shortName>
    </alternativeName>
</protein>
<organism>
    <name type="scientific">Beluga whale coronavirus (strain SW1)</name>
    <name type="common">BwCoV</name>
    <dbReference type="NCBI Taxonomy" id="694015"/>
    <lineage>
        <taxon>Viruses</taxon>
        <taxon>Riboviria</taxon>
        <taxon>Orthornavirae</taxon>
        <taxon>Pisuviricota</taxon>
        <taxon>Pisoniviricetes</taxon>
        <taxon>Nidovirales</taxon>
        <taxon>Cornidovirineae</taxon>
        <taxon>Coronaviridae</taxon>
        <taxon>Orthocoronavirinae</taxon>
        <taxon>Gammacoronavirus</taxon>
        <taxon>Cegacovirus</taxon>
    </lineage>
</organism>
<gene>
    <name type="primary">ORF10</name>
</gene>